<comment type="function">
    <text evidence="2 3">Molecular calcium-binding chaperone promoting folding, oligomeric assembly and quality control in the ER via the calreticulin/calnexin cycle. This lectin may interact transiently with almost all of the monoglucosylated glycoproteins that are synthesized in the ER. Probably by controlling the folding of extracellular matrix protein unc-52/Perlecan, may play a role in the formation of fibrous organelles, a hemidesmosome-like structure attaching muscles to the epidermis. Protects dopaminergic neurons against oxidative stress-induced neurodegeneration (By similarity).</text>
</comment>
<comment type="subcellular location">
    <subcellularLocation>
        <location evidence="5">Endoplasmic reticulum lumen</location>
    </subcellularLocation>
</comment>
<comment type="domain">
    <text evidence="1">Can be divided into a N-terminal globular domain, a proline-rich P-domain forming an elongated arm-like structure and a C-terminal acidic domain. The P-domain binds one molecule of calcium with high affinity, whereas the acidic C-domain binds multiple calcium ions with low affinity (By similarity).</text>
</comment>
<comment type="domain">
    <text evidence="1">The interaction with glycans occurs through a binding site in the globular lectin domain.</text>
</comment>
<comment type="domain">
    <text evidence="1">The zinc binding sites are localized to the N-domain.</text>
</comment>
<comment type="similarity">
    <text evidence="7">Belongs to the calreticulin family.</text>
</comment>
<organism>
    <name type="scientific">Caenorhabditis briggsae</name>
    <dbReference type="NCBI Taxonomy" id="6238"/>
    <lineage>
        <taxon>Eukaryota</taxon>
        <taxon>Metazoa</taxon>
        <taxon>Ecdysozoa</taxon>
        <taxon>Nematoda</taxon>
        <taxon>Chromadorea</taxon>
        <taxon>Rhabditida</taxon>
        <taxon>Rhabditina</taxon>
        <taxon>Rhabditomorpha</taxon>
        <taxon>Rhabditoidea</taxon>
        <taxon>Rhabditidae</taxon>
        <taxon>Peloderinae</taxon>
        <taxon>Caenorhabditis</taxon>
    </lineage>
</organism>
<evidence type="ECO:0000250" key="1"/>
<evidence type="ECO:0000250" key="2">
    <source>
        <dbReference type="UniProtKB" id="P14211"/>
    </source>
</evidence>
<evidence type="ECO:0000250" key="3">
    <source>
        <dbReference type="UniProtKB" id="P27798"/>
    </source>
</evidence>
<evidence type="ECO:0000255" key="4"/>
<evidence type="ECO:0000255" key="5">
    <source>
        <dbReference type="PROSITE-ProRule" id="PRU10138"/>
    </source>
</evidence>
<evidence type="ECO:0000256" key="6">
    <source>
        <dbReference type="SAM" id="MobiDB-lite"/>
    </source>
</evidence>
<evidence type="ECO:0000305" key="7"/>
<protein>
    <recommendedName>
        <fullName>Calreticulin</fullName>
    </recommendedName>
</protein>
<name>CALR_CAEBR</name>
<reference key="1">
    <citation type="journal article" date="2003" name="PLoS Biol.">
        <title>The genome sequence of Caenorhabditis briggsae: a platform for comparative genomics.</title>
        <authorList>
            <person name="Stein L.D."/>
            <person name="Bao Z."/>
            <person name="Blasiar D."/>
            <person name="Blumenthal T."/>
            <person name="Brent M.R."/>
            <person name="Chen N."/>
            <person name="Chinwalla A."/>
            <person name="Clarke L."/>
            <person name="Clee C."/>
            <person name="Coghlan A."/>
            <person name="Coulson A."/>
            <person name="D'Eustachio P."/>
            <person name="Fitch D.H.A."/>
            <person name="Fulton L.A."/>
            <person name="Fulton R.E."/>
            <person name="Griffiths-Jones S."/>
            <person name="Harris T.W."/>
            <person name="Hillier L.W."/>
            <person name="Kamath R."/>
            <person name="Kuwabara P.E."/>
            <person name="Mardis E.R."/>
            <person name="Marra M.A."/>
            <person name="Miner T.L."/>
            <person name="Minx P."/>
            <person name="Mullikin J.C."/>
            <person name="Plumb R.W."/>
            <person name="Rogers J."/>
            <person name="Schein J.E."/>
            <person name="Sohrmann M."/>
            <person name="Spieth J."/>
            <person name="Stajich J.E."/>
            <person name="Wei C."/>
            <person name="Willey D."/>
            <person name="Wilson R.K."/>
            <person name="Durbin R.M."/>
            <person name="Waterston R.H."/>
        </authorList>
    </citation>
    <scope>NUCLEOTIDE SEQUENCE [LARGE SCALE GENOMIC DNA]</scope>
    <source>
        <strain>AF16</strain>
    </source>
</reference>
<proteinExistence type="inferred from homology"/>
<sequence>MKSLCLLAIVAVVSAEVYFKEEFNDASWEKRWVQSKHKDDFGAFKLSAGKFFDVESRDQGIQTSQDAKFYSRAAKFDKEFSNKGKTLVIQYTVKHEQGIDCGGGYVKVMRGDADLADFHGETPYNVMFGPDICGPTRRVHVILNYKGENKLIKKEITCKSDELTHLYTLILNADNTYEVKIDGESAQTGSLEEDWDLLPAKKIKDPDAKKPEDWDEREYIDDAEDVKPEDWEKPEHIPDPDAKKPEDWDDEMDGEWEPPMIDNPEYKGEWKPKQIKNPAYKGKWIHPEIENPEYTPDDELYLYENWGAIGFDLWQVKSGTIFDNVLITDSVEEAEAHAAETFDKLKTVEKEKKEKADEEARKVEEEARKKAEEEKEAKKDDDEEEEKEEEEGHDEL</sequence>
<feature type="signal peptide" evidence="4">
    <location>
        <begin position="1"/>
        <end position="15"/>
    </location>
</feature>
<feature type="chain" id="PRO_0000246154" description="Calreticulin">
    <location>
        <begin position="16"/>
        <end position="396"/>
    </location>
</feature>
<feature type="repeat" description="1-1">
    <location>
        <begin position="186"/>
        <end position="197"/>
    </location>
</feature>
<feature type="repeat" description="1-2">
    <location>
        <begin position="205"/>
        <end position="216"/>
    </location>
</feature>
<feature type="repeat" description="1-3">
    <location>
        <begin position="222"/>
        <end position="233"/>
    </location>
</feature>
<feature type="repeat" description="1-4">
    <location>
        <begin position="239"/>
        <end position="250"/>
    </location>
</feature>
<feature type="repeat" description="2-1">
    <location>
        <begin position="254"/>
        <end position="264"/>
    </location>
</feature>
<feature type="repeat" description="2-2">
    <location>
        <begin position="268"/>
        <end position="278"/>
    </location>
</feature>
<feature type="repeat" description="2-3">
    <location>
        <begin position="282"/>
        <end position="292"/>
    </location>
</feature>
<feature type="region of interest" description="4 X approximate repeats">
    <location>
        <begin position="186"/>
        <end position="250"/>
    </location>
</feature>
<feature type="region of interest" description="N-domain">
    <location>
        <begin status="unknown"/>
        <end position="192"/>
    </location>
</feature>
<feature type="region of interest" description="P-domain">
    <location>
        <begin position="193"/>
        <end position="301"/>
    </location>
</feature>
<feature type="region of interest" description="Disordered" evidence="6">
    <location>
        <begin position="202"/>
        <end position="250"/>
    </location>
</feature>
<feature type="region of interest" description="3 X approximate repeats">
    <location>
        <begin position="254"/>
        <end position="292"/>
    </location>
</feature>
<feature type="region of interest" description="C-domain">
    <location>
        <begin position="302"/>
        <end position="396"/>
    </location>
</feature>
<feature type="region of interest" description="Disordered" evidence="6">
    <location>
        <begin position="342"/>
        <end position="396"/>
    </location>
</feature>
<feature type="short sequence motif" description="Prevents secretion from ER" evidence="5">
    <location>
        <begin position="393"/>
        <end position="396"/>
    </location>
</feature>
<feature type="compositionally biased region" description="Basic and acidic residues" evidence="6">
    <location>
        <begin position="202"/>
        <end position="212"/>
    </location>
</feature>
<feature type="compositionally biased region" description="Acidic residues" evidence="6">
    <location>
        <begin position="213"/>
        <end position="224"/>
    </location>
</feature>
<feature type="compositionally biased region" description="Basic and acidic residues" evidence="6">
    <location>
        <begin position="225"/>
        <end position="246"/>
    </location>
</feature>
<feature type="compositionally biased region" description="Basic and acidic residues" evidence="6">
    <location>
        <begin position="342"/>
        <end position="380"/>
    </location>
</feature>
<feature type="compositionally biased region" description="Acidic residues" evidence="6">
    <location>
        <begin position="381"/>
        <end position="396"/>
    </location>
</feature>
<feature type="binding site" evidence="2">
    <location>
        <position position="105"/>
    </location>
    <ligand>
        <name>an alpha-D-glucoside</name>
        <dbReference type="ChEBI" id="CHEBI:22390"/>
    </ligand>
</feature>
<feature type="binding site" evidence="2">
    <location>
        <position position="107"/>
    </location>
    <ligand>
        <name>an alpha-D-glucoside</name>
        <dbReference type="ChEBI" id="CHEBI:22390"/>
    </ligand>
</feature>
<feature type="binding site" evidence="2">
    <location>
        <position position="124"/>
    </location>
    <ligand>
        <name>an alpha-D-glucoside</name>
        <dbReference type="ChEBI" id="CHEBI:22390"/>
    </ligand>
</feature>
<feature type="binding site" evidence="2">
    <location>
        <position position="131"/>
    </location>
    <ligand>
        <name>an alpha-D-glucoside</name>
        <dbReference type="ChEBI" id="CHEBI:22390"/>
    </ligand>
</feature>
<feature type="binding site" evidence="2">
    <location>
        <position position="312"/>
    </location>
    <ligand>
        <name>an alpha-D-glucoside</name>
        <dbReference type="ChEBI" id="CHEBI:22390"/>
    </ligand>
</feature>
<feature type="disulfide bond" evidence="1">
    <location>
        <begin position="101"/>
        <end position="133"/>
    </location>
</feature>
<keyword id="KW-0106">Calcium</keyword>
<keyword id="KW-0143">Chaperone</keyword>
<keyword id="KW-1015">Disulfide bond</keyword>
<keyword id="KW-0256">Endoplasmic reticulum</keyword>
<keyword id="KW-0430">Lectin</keyword>
<keyword id="KW-0479">Metal-binding</keyword>
<keyword id="KW-1185">Reference proteome</keyword>
<keyword id="KW-0677">Repeat</keyword>
<keyword id="KW-0732">Signal</keyword>
<keyword id="KW-0862">Zinc</keyword>
<dbReference type="EMBL" id="HE600954">
    <property type="protein sequence ID" value="CAP29301.1"/>
    <property type="molecule type" value="Genomic_DNA"/>
</dbReference>
<dbReference type="SMR" id="Q61KR9"/>
<dbReference type="FunCoup" id="Q61KR9">
    <property type="interactions" value="2469"/>
</dbReference>
<dbReference type="STRING" id="6238.Q61KR9"/>
<dbReference type="EnsemblMetazoa" id="CBG09253.1">
    <property type="protein sequence ID" value="CBG09253.1"/>
    <property type="gene ID" value="WBGene00030869"/>
</dbReference>
<dbReference type="KEGG" id="cbr:CBG_09253"/>
<dbReference type="CTD" id="8578804"/>
<dbReference type="WormBase" id="CBG09253">
    <property type="protein sequence ID" value="CBP02265"/>
    <property type="gene ID" value="WBGene00030869"/>
    <property type="gene designation" value="Cbr-crt-1"/>
</dbReference>
<dbReference type="eggNOG" id="KOG0674">
    <property type="taxonomic scope" value="Eukaryota"/>
</dbReference>
<dbReference type="HOGENOM" id="CLU_018224_0_2_1"/>
<dbReference type="InParanoid" id="Q61KR9"/>
<dbReference type="OMA" id="DNRAGEW"/>
<dbReference type="Proteomes" id="UP000008549">
    <property type="component" value="Unassembled WGS sequence"/>
</dbReference>
<dbReference type="GO" id="GO:0005788">
    <property type="term" value="C:endoplasmic reticulum lumen"/>
    <property type="evidence" value="ECO:0007669"/>
    <property type="project" value="UniProtKB-SubCell"/>
</dbReference>
<dbReference type="GO" id="GO:0005789">
    <property type="term" value="C:endoplasmic reticulum membrane"/>
    <property type="evidence" value="ECO:0000318"/>
    <property type="project" value="GO_Central"/>
</dbReference>
<dbReference type="GO" id="GO:0005509">
    <property type="term" value="F:calcium ion binding"/>
    <property type="evidence" value="ECO:0000318"/>
    <property type="project" value="GO_Central"/>
</dbReference>
<dbReference type="GO" id="GO:0030246">
    <property type="term" value="F:carbohydrate binding"/>
    <property type="evidence" value="ECO:0007669"/>
    <property type="project" value="UniProtKB-KW"/>
</dbReference>
<dbReference type="GO" id="GO:0051082">
    <property type="term" value="F:unfolded protein binding"/>
    <property type="evidence" value="ECO:0007669"/>
    <property type="project" value="InterPro"/>
</dbReference>
<dbReference type="GO" id="GO:0030421">
    <property type="term" value="P:defecation"/>
    <property type="evidence" value="ECO:0007669"/>
    <property type="project" value="EnsemblMetazoa"/>
</dbReference>
<dbReference type="GO" id="GO:0008340">
    <property type="term" value="P:determination of adult lifespan"/>
    <property type="evidence" value="ECO:0007669"/>
    <property type="project" value="EnsemblMetazoa"/>
</dbReference>
<dbReference type="GO" id="GO:0032469">
    <property type="term" value="P:endoplasmic reticulum calcium ion homeostasis"/>
    <property type="evidence" value="ECO:0007669"/>
    <property type="project" value="EnsemblMetazoa"/>
</dbReference>
<dbReference type="GO" id="GO:0036503">
    <property type="term" value="P:ERAD pathway"/>
    <property type="evidence" value="ECO:0000318"/>
    <property type="project" value="GO_Central"/>
</dbReference>
<dbReference type="GO" id="GO:0031581">
    <property type="term" value="P:hemidesmosome assembly"/>
    <property type="evidence" value="ECO:0007669"/>
    <property type="project" value="EnsemblMetazoa"/>
</dbReference>
<dbReference type="GO" id="GO:0036498">
    <property type="term" value="P:IRE1-mediated unfolded protein response"/>
    <property type="evidence" value="ECO:0007669"/>
    <property type="project" value="EnsemblMetazoa"/>
</dbReference>
<dbReference type="GO" id="GO:0012501">
    <property type="term" value="P:programmed cell death"/>
    <property type="evidence" value="ECO:0007669"/>
    <property type="project" value="EnsemblMetazoa"/>
</dbReference>
<dbReference type="GO" id="GO:0006457">
    <property type="term" value="P:protein folding"/>
    <property type="evidence" value="ECO:0000318"/>
    <property type="project" value="GO_Central"/>
</dbReference>
<dbReference type="GO" id="GO:0010468">
    <property type="term" value="P:regulation of gene expression"/>
    <property type="evidence" value="ECO:0007669"/>
    <property type="project" value="EnsemblMetazoa"/>
</dbReference>
<dbReference type="GO" id="GO:0045471">
    <property type="term" value="P:response to ethanol"/>
    <property type="evidence" value="ECO:0007669"/>
    <property type="project" value="EnsemblMetazoa"/>
</dbReference>
<dbReference type="GO" id="GO:0009408">
    <property type="term" value="P:response to heat"/>
    <property type="evidence" value="ECO:0007669"/>
    <property type="project" value="EnsemblMetazoa"/>
</dbReference>
<dbReference type="FunFam" id="2.10.250.10:FF:000002">
    <property type="entry name" value="Calreticulin"/>
    <property type="match status" value="1"/>
</dbReference>
<dbReference type="FunFam" id="2.60.120.200:FF:000122">
    <property type="entry name" value="Calreticulin 3"/>
    <property type="match status" value="1"/>
</dbReference>
<dbReference type="Gene3D" id="2.60.120.200">
    <property type="match status" value="1"/>
</dbReference>
<dbReference type="Gene3D" id="2.10.250.10">
    <property type="entry name" value="Calreticulin/calnexin, P domain"/>
    <property type="match status" value="1"/>
</dbReference>
<dbReference type="InterPro" id="IPR001580">
    <property type="entry name" value="Calret/calnex"/>
</dbReference>
<dbReference type="InterPro" id="IPR018124">
    <property type="entry name" value="Calret/calnex_CS"/>
</dbReference>
<dbReference type="InterPro" id="IPR009169">
    <property type="entry name" value="Calreticulin"/>
</dbReference>
<dbReference type="InterPro" id="IPR009033">
    <property type="entry name" value="Calreticulin/calnexin_P_dom_sf"/>
</dbReference>
<dbReference type="InterPro" id="IPR013320">
    <property type="entry name" value="ConA-like_dom_sf"/>
</dbReference>
<dbReference type="PANTHER" id="PTHR11073:SF2">
    <property type="entry name" value="CALRETICULIN"/>
    <property type="match status" value="1"/>
</dbReference>
<dbReference type="PANTHER" id="PTHR11073">
    <property type="entry name" value="CALRETICULIN AND CALNEXIN"/>
    <property type="match status" value="1"/>
</dbReference>
<dbReference type="Pfam" id="PF00262">
    <property type="entry name" value="Calreticulin"/>
    <property type="match status" value="2"/>
</dbReference>
<dbReference type="PIRSF" id="PIRSF002356">
    <property type="entry name" value="Calreticulin"/>
    <property type="match status" value="1"/>
</dbReference>
<dbReference type="PRINTS" id="PR00626">
    <property type="entry name" value="CALRETICULIN"/>
</dbReference>
<dbReference type="SUPFAM" id="SSF49899">
    <property type="entry name" value="Concanavalin A-like lectins/glucanases"/>
    <property type="match status" value="1"/>
</dbReference>
<dbReference type="SUPFAM" id="SSF63887">
    <property type="entry name" value="P-domain of calnexin/calreticulin"/>
    <property type="match status" value="1"/>
</dbReference>
<dbReference type="PROSITE" id="PS00803">
    <property type="entry name" value="CALRETICULIN_1"/>
    <property type="match status" value="1"/>
</dbReference>
<dbReference type="PROSITE" id="PS00804">
    <property type="entry name" value="CALRETICULIN_2"/>
    <property type="match status" value="1"/>
</dbReference>
<dbReference type="PROSITE" id="PS00805">
    <property type="entry name" value="CALRETICULIN_REPEAT"/>
    <property type="match status" value="3"/>
</dbReference>
<dbReference type="PROSITE" id="PS00014">
    <property type="entry name" value="ER_TARGET"/>
    <property type="match status" value="1"/>
</dbReference>
<gene>
    <name type="primary">crt-1</name>
    <name type="ORF">CBG09253</name>
</gene>
<accession>Q61KR9</accession>
<accession>A8X9I9</accession>